<reference key="1">
    <citation type="journal article" date="2010" name="J. Bacteriol.">
        <title>The genetic basis of laboratory adaptation in Caulobacter crescentus.</title>
        <authorList>
            <person name="Marks M.E."/>
            <person name="Castro-Rojas C.M."/>
            <person name="Teiling C."/>
            <person name="Du L."/>
            <person name="Kapatral V."/>
            <person name="Walunas T.L."/>
            <person name="Crosson S."/>
        </authorList>
    </citation>
    <scope>NUCLEOTIDE SEQUENCE [LARGE SCALE GENOMIC DNA]</scope>
    <source>
        <strain>NA1000 / CB15N</strain>
    </source>
</reference>
<reference key="2">
    <citation type="journal article" date="2021" name="Environ. Microbiol.">
        <title>Five structural genes required for ceramide synthesis in Caulobacter and for bacterial survival.</title>
        <authorList>
            <person name="Olea-Ozuna R.J."/>
            <person name="Poggio S."/>
            <person name="Bergstroem E."/>
            <person name="Quiroz-Rocha E."/>
            <person name="Garcia-Soriano D.A."/>
            <person name="Sahonero-Canavesi D.X."/>
            <person name="Padilla-Gomez J."/>
            <person name="Martinez-Aguilar L."/>
            <person name="Lopez-Lara I.M."/>
            <person name="Thomas-Oates J."/>
            <person name="Geiger O."/>
        </authorList>
    </citation>
    <scope>FUNCTION</scope>
    <scope>DISRUPTION PHENOTYPE</scope>
    <source>
        <strain>NA1000 / CB15N</strain>
    </source>
</reference>
<reference key="3">
    <citation type="journal article" date="2022" name="Nat. Chem. Biol.">
        <title>Convergent evolution of bacterial ceramide synthesis.</title>
        <authorList>
            <person name="Stankeviciute G."/>
            <person name="Tang P."/>
            <person name="Ashley B."/>
            <person name="Chamberlain J.D."/>
            <person name="Hansen M.E.B."/>
            <person name="Coleman A."/>
            <person name="D'Emilia R."/>
            <person name="Fu L."/>
            <person name="Mohan E.C."/>
            <person name="Nguyen H."/>
            <person name="Guan Z."/>
            <person name="Campopiano D.J."/>
            <person name="Klein E.A."/>
        </authorList>
    </citation>
    <scope>FUNCTION</scope>
    <scope>CATALYTIC ACTIVITY</scope>
    <scope>BIOPHYSICOCHEMICAL PROPERTIES</scope>
    <scope>SUBCELLULAR LOCATION</scope>
    <scope>DISRUPTION PHENOTYPE</scope>
    <scope>IDENTIFICATION BY MASS SPECTROMETRY</scope>
    <source>
        <strain>NA1000 / CB15N</strain>
    </source>
</reference>
<sequence length="384" mass="43279">MPFDSTNADLSVIPVKTPAELKRFIALPARLNAKDPNWITPLFMERTDALTPKTNPFFDHAEVQLFLATRGGRDVGRISAQIDQLTPQPTEGRLDGHFGMIAAEDDPAVFNVLFRAAEDWLRARGRTHAVGPFNLSINEEVGLLVWGFDTPPMVLMGHDPVYAGPRVEEQGYAKAQDLFAYKADETGDIPEIAQRRVKRGLPSGVVLRQLDMSRYDQEVQTLTEILNDAWSDNWGFTPTTEAETRQLAKSLKQVIDQRLVWFSEIDGEAAGVVVFLPNVNEAIADLKGKLLPFGWAKLLWRLKVKGVKSARIPLMGVKKKFQTSQRGRMLPFWMMKASRDMAMSLGYNRYEISWVLEANKAMTHIAENVGGTHYKTYRVYEKAL</sequence>
<comment type="function">
    <text evidence="1 2">Involved in de novo bacterial ceramide synthesis (PubMed:33063925, PubMed:34969973). Catalyzes the condensation of 3-oxosphinganine with an acyl-CoA to generate oxidized ceramides (PubMed:34969973). Can use acyl-CoA substrates ranging from C8 to C24, with highest in vitro activity with C14 and very little activity with acyl-CoA thioesters of 18 carbons or longer (PubMed:34969973). May have a preference for monounsaturated acyl-CoA substrates, as it has a threefold greater preference for C16:1-CoA over C16:0-CoA as a substrate in vitro (PubMed:34969973).</text>
</comment>
<comment type="catalytic activity">
    <reaction evidence="2">
        <text>3-oxosphinganine + a fatty acyl-CoA = N-acyl-3-oxosphinganine + CoA + H(+)</text>
        <dbReference type="Rhea" id="RHEA:70359"/>
        <dbReference type="ChEBI" id="CHEBI:15378"/>
        <dbReference type="ChEBI" id="CHEBI:57287"/>
        <dbReference type="ChEBI" id="CHEBI:58299"/>
        <dbReference type="ChEBI" id="CHEBI:77636"/>
        <dbReference type="ChEBI" id="CHEBI:189535"/>
    </reaction>
    <physiologicalReaction direction="left-to-right" evidence="2">
        <dbReference type="Rhea" id="RHEA:70360"/>
    </physiologicalReaction>
</comment>
<comment type="catalytic activity">
    <reaction evidence="2">
        <text>3-oxosphinganine + tetradecanoyl-CoA = N-tetradecanoyl-3-oxosphinganine + CoA + H(+)</text>
        <dbReference type="Rhea" id="RHEA:70379"/>
        <dbReference type="ChEBI" id="CHEBI:15378"/>
        <dbReference type="ChEBI" id="CHEBI:57287"/>
        <dbReference type="ChEBI" id="CHEBI:57385"/>
        <dbReference type="ChEBI" id="CHEBI:58299"/>
        <dbReference type="ChEBI" id="CHEBI:189536"/>
    </reaction>
    <physiologicalReaction direction="left-to-right" evidence="2">
        <dbReference type="Rhea" id="RHEA:70380"/>
    </physiologicalReaction>
</comment>
<comment type="catalytic activity">
    <reaction evidence="2">
        <text>3-oxosphinganine + hexadecanoyl-CoA = N-hexadecanoyl-3-oxosphinganine + CoA + H(+)</text>
        <dbReference type="Rhea" id="RHEA:70383"/>
        <dbReference type="ChEBI" id="CHEBI:15378"/>
        <dbReference type="ChEBI" id="CHEBI:57287"/>
        <dbReference type="ChEBI" id="CHEBI:57379"/>
        <dbReference type="ChEBI" id="CHEBI:58299"/>
        <dbReference type="ChEBI" id="CHEBI:189534"/>
    </reaction>
    <physiologicalReaction direction="left-to-right" evidence="2">
        <dbReference type="Rhea" id="RHEA:70384"/>
    </physiologicalReaction>
</comment>
<comment type="catalytic activity">
    <reaction evidence="2">
        <text>3-oxosphinganine + (9Z)-hexadecenoyl-CoA = N-(9Z-hexadecenoyl)-3-oxosphinganine + CoA + H(+)</text>
        <dbReference type="Rhea" id="RHEA:70403"/>
        <dbReference type="ChEBI" id="CHEBI:15378"/>
        <dbReference type="ChEBI" id="CHEBI:57287"/>
        <dbReference type="ChEBI" id="CHEBI:58299"/>
        <dbReference type="ChEBI" id="CHEBI:61540"/>
        <dbReference type="ChEBI" id="CHEBI:189544"/>
    </reaction>
    <physiologicalReaction direction="left-to-right" evidence="2">
        <dbReference type="Rhea" id="RHEA:70404"/>
    </physiologicalReaction>
</comment>
<comment type="catalytic activity">
    <reaction evidence="2">
        <text>3-oxosphinganine + octanoyl-CoA = N-octanoyl-3-oxosphinganine + CoA + H(+)</text>
        <dbReference type="Rhea" id="RHEA:70367"/>
        <dbReference type="ChEBI" id="CHEBI:15378"/>
        <dbReference type="ChEBI" id="CHEBI:57287"/>
        <dbReference type="ChEBI" id="CHEBI:57386"/>
        <dbReference type="ChEBI" id="CHEBI:58299"/>
        <dbReference type="ChEBI" id="CHEBI:189539"/>
    </reaction>
    <physiologicalReaction direction="left-to-right" evidence="2">
        <dbReference type="Rhea" id="RHEA:70368"/>
    </physiologicalReaction>
</comment>
<comment type="catalytic activity">
    <reaction evidence="2">
        <text>3-oxosphinganine + decanoyl-CoA = N-decanoyl-3-oxosphinganine + CoA + H(+)</text>
        <dbReference type="Rhea" id="RHEA:70371"/>
        <dbReference type="ChEBI" id="CHEBI:15378"/>
        <dbReference type="ChEBI" id="CHEBI:57287"/>
        <dbReference type="ChEBI" id="CHEBI:58299"/>
        <dbReference type="ChEBI" id="CHEBI:61430"/>
        <dbReference type="ChEBI" id="CHEBI:189538"/>
    </reaction>
    <physiologicalReaction direction="left-to-right" evidence="2">
        <dbReference type="Rhea" id="RHEA:70372"/>
    </physiologicalReaction>
</comment>
<comment type="catalytic activity">
    <reaction evidence="2">
        <text>3-oxosphinganine + dodecanoyl-CoA = N-dodecanoyl-3-oxosphinganine + CoA + H(+)</text>
        <dbReference type="Rhea" id="RHEA:70375"/>
        <dbReference type="ChEBI" id="CHEBI:15378"/>
        <dbReference type="ChEBI" id="CHEBI:57287"/>
        <dbReference type="ChEBI" id="CHEBI:57375"/>
        <dbReference type="ChEBI" id="CHEBI:58299"/>
        <dbReference type="ChEBI" id="CHEBI:189537"/>
    </reaction>
    <physiologicalReaction direction="left-to-right" evidence="2">
        <dbReference type="Rhea" id="RHEA:70376"/>
    </physiologicalReaction>
</comment>
<comment type="catalytic activity">
    <reaction evidence="2">
        <text>3-oxosphinganine + octadecanoyl-CoA = N-octadecanoyl-3-oxosphinganine + CoA + H(+)</text>
        <dbReference type="Rhea" id="RHEA:70387"/>
        <dbReference type="ChEBI" id="CHEBI:15378"/>
        <dbReference type="ChEBI" id="CHEBI:57287"/>
        <dbReference type="ChEBI" id="CHEBI:57394"/>
        <dbReference type="ChEBI" id="CHEBI:58299"/>
        <dbReference type="ChEBI" id="CHEBI:189540"/>
    </reaction>
    <physiologicalReaction direction="left-to-right" evidence="2">
        <dbReference type="Rhea" id="RHEA:70388"/>
    </physiologicalReaction>
</comment>
<comment type="catalytic activity">
    <reaction evidence="2">
        <text>3-oxosphinganine + eicosanoyl-CoA = N-eicosanoyl-3-oxosphinganine + CoA + H(+)</text>
        <dbReference type="Rhea" id="RHEA:70391"/>
        <dbReference type="ChEBI" id="CHEBI:15378"/>
        <dbReference type="ChEBI" id="CHEBI:57287"/>
        <dbReference type="ChEBI" id="CHEBI:57380"/>
        <dbReference type="ChEBI" id="CHEBI:58299"/>
        <dbReference type="ChEBI" id="CHEBI:189541"/>
    </reaction>
    <physiologicalReaction direction="left-to-right" evidence="2">
        <dbReference type="Rhea" id="RHEA:70392"/>
    </physiologicalReaction>
</comment>
<comment type="catalytic activity">
    <reaction evidence="2">
        <text>3-oxosphinganine + docosanoyl-CoA = N-docosanoyl-3-ketodihydrosphingosine + CoA + H(+)</text>
        <dbReference type="Rhea" id="RHEA:70395"/>
        <dbReference type="ChEBI" id="CHEBI:15378"/>
        <dbReference type="ChEBI" id="CHEBI:57287"/>
        <dbReference type="ChEBI" id="CHEBI:58299"/>
        <dbReference type="ChEBI" id="CHEBI:65059"/>
        <dbReference type="ChEBI" id="CHEBI:189542"/>
    </reaction>
    <physiologicalReaction direction="left-to-right" evidence="2">
        <dbReference type="Rhea" id="RHEA:70396"/>
    </physiologicalReaction>
</comment>
<comment type="catalytic activity">
    <reaction evidence="2">
        <text>3-oxosphinganine + tetracosanoyl-CoA = N-tetracosanoyl-3-oxosphinganine + CoA + H(+)</text>
        <dbReference type="Rhea" id="RHEA:70399"/>
        <dbReference type="ChEBI" id="CHEBI:15378"/>
        <dbReference type="ChEBI" id="CHEBI:57287"/>
        <dbReference type="ChEBI" id="CHEBI:58299"/>
        <dbReference type="ChEBI" id="CHEBI:65052"/>
        <dbReference type="ChEBI" id="CHEBI:189543"/>
    </reaction>
    <physiologicalReaction direction="left-to-right" evidence="2">
        <dbReference type="Rhea" id="RHEA:70400"/>
    </physiologicalReaction>
</comment>
<comment type="biophysicochemical properties">
    <kinetics>
        <KM evidence="2">21.3 uM for hexadecanoyl-CoA</KM>
    </kinetics>
</comment>
<comment type="pathway">
    <text evidence="4">Lipid metabolism; sphingolipid metabolism.</text>
</comment>
<comment type="subcellular location">
    <subcellularLocation>
        <location evidence="5">Cytoplasm</location>
    </subcellularLocation>
</comment>
<comment type="disruption phenotype">
    <text evidence="1 2">Deletion mutant cannot form bacterial ceramide (PubMed:33063925, PubMed:34969973). Mutants are impaired in growth at elevated temperatures but are resistant towards the antibiotic polymyxin B (PubMed:33063925).</text>
</comment>
<comment type="miscellaneous">
    <text evidence="2">The bacterial ceramide synthesis pathway operates in a different order from that in eukaryotes. Furthermore, phylogenetic analyses support the hypothesis that the bacterial and eukaryotic ceramide pathways evolved independently.</text>
</comment>
<protein>
    <recommendedName>
        <fullName evidence="3">Bacterial ceramide synthase</fullName>
        <ecNumber evidence="2">2.3.1.-</ecNumber>
    </recommendedName>
</protein>
<feature type="chain" id="PRO_0000455453" description="Bacterial ceramide synthase">
    <location>
        <begin position="1"/>
        <end position="384"/>
    </location>
</feature>
<accession>A0A0H3C8X0</accession>
<organism>
    <name type="scientific">Caulobacter vibrioides (strain NA1000 / CB15N)</name>
    <name type="common">Caulobacter crescentus</name>
    <dbReference type="NCBI Taxonomy" id="565050"/>
    <lineage>
        <taxon>Bacteria</taxon>
        <taxon>Pseudomonadati</taxon>
        <taxon>Pseudomonadota</taxon>
        <taxon>Alphaproteobacteria</taxon>
        <taxon>Caulobacterales</taxon>
        <taxon>Caulobacteraceae</taxon>
        <taxon>Caulobacter</taxon>
    </lineage>
</organism>
<keyword id="KW-0012">Acyltransferase</keyword>
<keyword id="KW-0963">Cytoplasm</keyword>
<keyword id="KW-0443">Lipid metabolism</keyword>
<keyword id="KW-1185">Reference proteome</keyword>
<keyword id="KW-0808">Transferase</keyword>
<dbReference type="EC" id="2.3.1.-" evidence="2"/>
<dbReference type="EMBL" id="CP001340">
    <property type="protein sequence ID" value="ACL94677.1"/>
    <property type="molecule type" value="Genomic_DNA"/>
</dbReference>
<dbReference type="RefSeq" id="WP_010919038.1">
    <property type="nucleotide sequence ID" value="NC_011916.1"/>
</dbReference>
<dbReference type="RefSeq" id="YP_002516585.1">
    <property type="nucleotide sequence ID" value="NC_011916.1"/>
</dbReference>
<dbReference type="GeneID" id="7333605"/>
<dbReference type="KEGG" id="ccs:CCNA_01212"/>
<dbReference type="PATRIC" id="fig|565050.3.peg.1194"/>
<dbReference type="HOGENOM" id="CLU_053649_0_0_5"/>
<dbReference type="OrthoDB" id="9806005at2"/>
<dbReference type="PhylomeDB" id="A0A0H3C8X0"/>
<dbReference type="UniPathway" id="UPA00222"/>
<dbReference type="Proteomes" id="UP000001364">
    <property type="component" value="Chromosome"/>
</dbReference>
<dbReference type="GO" id="GO:0005737">
    <property type="term" value="C:cytoplasm"/>
    <property type="evidence" value="ECO:0007669"/>
    <property type="project" value="UniProtKB-SubCell"/>
</dbReference>
<dbReference type="GO" id="GO:0016020">
    <property type="term" value="C:membrane"/>
    <property type="evidence" value="ECO:0007669"/>
    <property type="project" value="GOC"/>
</dbReference>
<dbReference type="GO" id="GO:0016746">
    <property type="term" value="F:acyltransferase activity"/>
    <property type="evidence" value="ECO:0007669"/>
    <property type="project" value="UniProtKB-KW"/>
</dbReference>
<dbReference type="GO" id="GO:0006665">
    <property type="term" value="P:sphingolipid metabolic process"/>
    <property type="evidence" value="ECO:0007669"/>
    <property type="project" value="UniProtKB-UniPathway"/>
</dbReference>
<dbReference type="Gene3D" id="3.40.630.30">
    <property type="match status" value="1"/>
</dbReference>
<dbReference type="InterPro" id="IPR016181">
    <property type="entry name" value="Acyl_CoA_acyltransferase"/>
</dbReference>
<dbReference type="InterPro" id="IPR039968">
    <property type="entry name" value="BcerS-like"/>
</dbReference>
<dbReference type="PANTHER" id="PTHR41368">
    <property type="entry name" value="PROTEIN YGHO"/>
    <property type="match status" value="1"/>
</dbReference>
<dbReference type="PANTHER" id="PTHR41368:SF1">
    <property type="entry name" value="PROTEIN YGHO"/>
    <property type="match status" value="1"/>
</dbReference>
<dbReference type="SUPFAM" id="SSF55729">
    <property type="entry name" value="Acyl-CoA N-acyltransferases (Nat)"/>
    <property type="match status" value="1"/>
</dbReference>
<name>CERS_CAUVN</name>
<proteinExistence type="evidence at protein level"/>
<evidence type="ECO:0000269" key="1">
    <source>
    </source>
</evidence>
<evidence type="ECO:0000269" key="2">
    <source>
    </source>
</evidence>
<evidence type="ECO:0000303" key="3">
    <source>
    </source>
</evidence>
<evidence type="ECO:0000305" key="4"/>
<evidence type="ECO:0000305" key="5">
    <source>
    </source>
</evidence>
<evidence type="ECO:0000312" key="6">
    <source>
        <dbReference type="EMBL" id="ACL94677.1"/>
    </source>
</evidence>
<gene>
    <name evidence="3" type="primary">bcerS</name>
    <name evidence="6" type="ordered locus">CCNA_01212</name>
</gene>